<reference key="1">
    <citation type="journal article" date="2008" name="Genome Res.">
        <title>Comparative genome analysis of Salmonella enteritidis PT4 and Salmonella gallinarum 287/91 provides insights into evolutionary and host adaptation pathways.</title>
        <authorList>
            <person name="Thomson N.R."/>
            <person name="Clayton D.J."/>
            <person name="Windhorst D."/>
            <person name="Vernikos G."/>
            <person name="Davidson S."/>
            <person name="Churcher C."/>
            <person name="Quail M.A."/>
            <person name="Stevens M."/>
            <person name="Jones M.A."/>
            <person name="Watson M."/>
            <person name="Barron A."/>
            <person name="Layton A."/>
            <person name="Pickard D."/>
            <person name="Kingsley R.A."/>
            <person name="Bignell A."/>
            <person name="Clark L."/>
            <person name="Harris B."/>
            <person name="Ormond D."/>
            <person name="Abdellah Z."/>
            <person name="Brooks K."/>
            <person name="Cherevach I."/>
            <person name="Chillingworth T."/>
            <person name="Woodward J."/>
            <person name="Norberczak H."/>
            <person name="Lord A."/>
            <person name="Arrowsmith C."/>
            <person name="Jagels K."/>
            <person name="Moule S."/>
            <person name="Mungall K."/>
            <person name="Saunders M."/>
            <person name="Whitehead S."/>
            <person name="Chabalgoity J.A."/>
            <person name="Maskell D."/>
            <person name="Humphreys T."/>
            <person name="Roberts M."/>
            <person name="Barrow P.A."/>
            <person name="Dougan G."/>
            <person name="Parkhill J."/>
        </authorList>
    </citation>
    <scope>NUCLEOTIDE SEQUENCE [LARGE SCALE GENOMIC DNA]</scope>
    <source>
        <strain>P125109</strain>
    </source>
</reference>
<proteinExistence type="inferred from homology"/>
<evidence type="ECO:0000255" key="1">
    <source>
        <dbReference type="HAMAP-Rule" id="MF_01800"/>
    </source>
</evidence>
<evidence type="ECO:0000256" key="2">
    <source>
        <dbReference type="SAM" id="MobiDB-lite"/>
    </source>
</evidence>
<keyword id="KW-0067">ATP-binding</keyword>
<keyword id="KW-0131">Cell cycle</keyword>
<keyword id="KW-0132">Cell division</keyword>
<keyword id="KW-0159">Chromosome partition</keyword>
<keyword id="KW-0175">Coiled coil</keyword>
<keyword id="KW-0963">Cytoplasm</keyword>
<keyword id="KW-0226">DNA condensation</keyword>
<keyword id="KW-0238">DNA-binding</keyword>
<keyword id="KW-0547">Nucleotide-binding</keyword>
<organism>
    <name type="scientific">Salmonella enteritidis PT4 (strain P125109)</name>
    <dbReference type="NCBI Taxonomy" id="550537"/>
    <lineage>
        <taxon>Bacteria</taxon>
        <taxon>Pseudomonadati</taxon>
        <taxon>Pseudomonadota</taxon>
        <taxon>Gammaproteobacteria</taxon>
        <taxon>Enterobacterales</taxon>
        <taxon>Enterobacteriaceae</taxon>
        <taxon>Salmonella</taxon>
    </lineage>
</organism>
<feature type="chain" id="PRO_1000187483" description="Chromosome partition protein MukB">
    <location>
        <begin position="1"/>
        <end position="1488"/>
    </location>
</feature>
<feature type="region of interest" description="Flexible hinge" evidence="1">
    <location>
        <begin position="666"/>
        <end position="783"/>
    </location>
</feature>
<feature type="region of interest" description="Disordered" evidence="2">
    <location>
        <begin position="1049"/>
        <end position="1074"/>
    </location>
</feature>
<feature type="coiled-coil region" evidence="1">
    <location>
        <begin position="326"/>
        <end position="418"/>
    </location>
</feature>
<feature type="coiled-coil region" evidence="1">
    <location>
        <begin position="444"/>
        <end position="472"/>
    </location>
</feature>
<feature type="coiled-coil region" evidence="1">
    <location>
        <begin position="509"/>
        <end position="602"/>
    </location>
</feature>
<feature type="coiled-coil region" evidence="1">
    <location>
        <begin position="835"/>
        <end position="923"/>
    </location>
</feature>
<feature type="coiled-coil region" evidence="1">
    <location>
        <begin position="977"/>
        <end position="1116"/>
    </location>
</feature>
<feature type="coiled-coil region" evidence="1">
    <location>
        <begin position="1209"/>
        <end position="1265"/>
    </location>
</feature>
<feature type="compositionally biased region" description="Basic and acidic residues" evidence="2">
    <location>
        <begin position="1051"/>
        <end position="1065"/>
    </location>
</feature>
<feature type="binding site" evidence="1">
    <location>
        <begin position="34"/>
        <end position="41"/>
    </location>
    <ligand>
        <name>ATP</name>
        <dbReference type="ChEBI" id="CHEBI:30616"/>
    </ligand>
</feature>
<name>MUKB_SALEP</name>
<gene>
    <name evidence="1" type="primary">mukB</name>
    <name type="ordered locus">SEN0898</name>
</gene>
<protein>
    <recommendedName>
        <fullName evidence="1">Chromosome partition protein MukB</fullName>
    </recommendedName>
    <alternativeName>
        <fullName evidence="1">Structural maintenance of chromosome-related protein</fullName>
    </alternativeName>
</protein>
<sequence>MIERGKFRSLTLINWNGFFARTFDLDELVTTLSGGNGAGKSTTMAAFVTALIPDLTLLHFRNTTEAGATSGSRDKGLHGKLKAGVCYSMLDTINSRHQRVVVGVRLQQVAGRDRKVDIKPFAIQGLPMSVQPTQLVTETLNERQARVLSLAELKDKLDEMEGVQFKQFNSITDYHSLMFDLGIIARRLRSASDRSKFYRLIEASLYGGISSAITRSLRDYLLPENSGVRKAFQDMEAALRENRLTLEAIRVTQSDRDLFKHLISEATDYVAADYMRHANERRVHLDQALAFRRELYTSRKQLAAEQYKHVDMARELGEHNGAEGSLEADYQAASDHLNLVQTALRQQEKIERYEADLEELQIRLEEQNEVVAEAAEMQDENEARAEAAELEVDELKSQLADYQQALDVQQTRAIQYNQAISALARAKELCHLPDLTPESAAEWLDTFQAKEQEATEKLLSLEQKMSVAQTAHSQFEQAYQLVAAINGPLARSEAWDVARELLRDGVNQRHLAEQVQPLRMRLSELEQRLREQQEAERLLAEFCKRQGKNFDIDELEALHQELEARIASLSESVSSASEQRMALRQEQEQLQSRIQHLMQRAPVWLAAQNSLNQLSEQCGEEFTSSQEVTEYLQQLLEREREAIVERDEVGARKNAVDEEIERLSQPGGAEDQRLNALAERFGGVLLSEIYDDVSLEDAPYFSALYGPSRHAIVVPDLSQIAEQLEGLTDCPEDLYLIEGDPQSFDDSVFSVDELEKAVVVKIADRQWRYSRFPSLPIFGRAARENRIESLHAEREVLSERFATLSFDVQKTQRLHQAFSRFIGSHLSVAFEDDPEAEIRRLNGRRVELERALATHESDNQQQRLQFEQAKEGVSALNRLLPRLNLLADETLADRVDEIQERLDEAQEAARFVQQYGNQLAKLEPVVSVLQSDPEQFEQLKEDYAWSQQMQRDARQQAFALAEVVERRAHFSYSDSAEMLSGNSDLNEKLRQRLEQAEAERTRAREALRSHAAQLSQYSQVLASLKSSYDTKKELLNDLQRELQDIGVRADSGAEERARQRRDELHAQLSNNRSRRNQLEKALTFCEAEMENLTRKLRKLERDYHEMREQVVTAKAGWCAVMRMVKDNGVERRLHRRELAYLSADELRSMSDKALGALRLAVADNEHLRDVLRLSEDPKRPERKIQFFVAVYQHLRERIRQDIIRTDDPVEAIEQMEIELSRLTEELTSREQKLAISSRSVANIIRKTIQREQNRIRMLNQGLQSVSFGQVNSVRLNVNVRETHATLLDVLSEQQEQHQDLFNSNRLTFSEALAKLYQRLNPQIDMGQRTPQTIGEELLDYRNYLEMEVEVNRGSDGWLRAESGALSTGEAIGTGMSILVMVVQSWEDEARRLRGKDISPCRLLFLDEAARLDARSIATLFELCERLQMQLIIAAPENISPEKGTTYKLVRKVFQNTEHVHVVGLRGFAPQLPETLPGTQTEDTPSEAS</sequence>
<accession>B5QZC8</accession>
<comment type="function">
    <text evidence="1">Plays a central role in chromosome condensation, segregation and cell cycle progression. Functions as a homodimer, which is essential for chromosome partition. Involved in negative DNA supercoiling in vivo, and by this means organize and compact chromosomes. May achieve or facilitate chromosome segregation by condensation DNA from both sides of a centrally located replisome during cell division.</text>
</comment>
<comment type="subunit">
    <text evidence="1">Homodimerization via its hinge domain. Binds to DNA via its C-terminal region. Interacts, and probably forms a ternary complex, with MukE and MukF via its C-terminal region. The complex formation is stimulated by calcium or magnesium. Interacts with tubulin-related protein FtsZ.</text>
</comment>
<comment type="subcellular location">
    <subcellularLocation>
        <location evidence="1">Cytoplasm</location>
        <location evidence="1">Nucleoid</location>
    </subcellularLocation>
    <text evidence="1">Restricted to the nucleoid region.</text>
</comment>
<comment type="domain">
    <text evidence="1">The hinge domain, which separates the large intramolecular coiled coil regions, allows the homodimerization, forming a V-shaped homodimer.</text>
</comment>
<comment type="similarity">
    <text evidence="1">Belongs to the SMC family. MukB subfamily.</text>
</comment>
<dbReference type="EMBL" id="AM933172">
    <property type="protein sequence ID" value="CAR32481.1"/>
    <property type="molecule type" value="Genomic_DNA"/>
</dbReference>
<dbReference type="RefSeq" id="WP_000572746.1">
    <property type="nucleotide sequence ID" value="NC_011294.1"/>
</dbReference>
<dbReference type="SMR" id="B5QZC8"/>
<dbReference type="KEGG" id="set:SEN0898"/>
<dbReference type="HOGENOM" id="CLU_004430_0_0_6"/>
<dbReference type="Proteomes" id="UP000000613">
    <property type="component" value="Chromosome"/>
</dbReference>
<dbReference type="GO" id="GO:0005737">
    <property type="term" value="C:cytoplasm"/>
    <property type="evidence" value="ECO:0007669"/>
    <property type="project" value="UniProtKB-UniRule"/>
</dbReference>
<dbReference type="GO" id="GO:0009295">
    <property type="term" value="C:nucleoid"/>
    <property type="evidence" value="ECO:0007669"/>
    <property type="project" value="UniProtKB-SubCell"/>
</dbReference>
<dbReference type="GO" id="GO:0005524">
    <property type="term" value="F:ATP binding"/>
    <property type="evidence" value="ECO:0007669"/>
    <property type="project" value="UniProtKB-UniRule"/>
</dbReference>
<dbReference type="GO" id="GO:0003677">
    <property type="term" value="F:DNA binding"/>
    <property type="evidence" value="ECO:0007669"/>
    <property type="project" value="UniProtKB-UniRule"/>
</dbReference>
<dbReference type="GO" id="GO:0051301">
    <property type="term" value="P:cell division"/>
    <property type="evidence" value="ECO:0007669"/>
    <property type="project" value="UniProtKB-KW"/>
</dbReference>
<dbReference type="GO" id="GO:0030261">
    <property type="term" value="P:chromosome condensation"/>
    <property type="evidence" value="ECO:0007669"/>
    <property type="project" value="UniProtKB-KW"/>
</dbReference>
<dbReference type="GO" id="GO:0007059">
    <property type="term" value="P:chromosome segregation"/>
    <property type="evidence" value="ECO:0007669"/>
    <property type="project" value="UniProtKB-UniRule"/>
</dbReference>
<dbReference type="GO" id="GO:0006260">
    <property type="term" value="P:DNA replication"/>
    <property type="evidence" value="ECO:0007669"/>
    <property type="project" value="UniProtKB-UniRule"/>
</dbReference>
<dbReference type="FunFam" id="3.30.70.3500:FF:000001">
    <property type="entry name" value="Chromosome partition protein MukB"/>
    <property type="match status" value="1"/>
</dbReference>
<dbReference type="FunFam" id="3.40.1140.10:FF:000001">
    <property type="entry name" value="Chromosome partition protein MukB"/>
    <property type="match status" value="1"/>
</dbReference>
<dbReference type="FunFam" id="3.40.1140.10:FF:000002">
    <property type="entry name" value="Chromosome partition protein MukB"/>
    <property type="match status" value="1"/>
</dbReference>
<dbReference type="Gene3D" id="1.10.287.1490">
    <property type="match status" value="1"/>
</dbReference>
<dbReference type="Gene3D" id="1.20.58.850">
    <property type="match status" value="1"/>
</dbReference>
<dbReference type="Gene3D" id="3.40.1140.10">
    <property type="match status" value="2"/>
</dbReference>
<dbReference type="Gene3D" id="1.20.5.420">
    <property type="entry name" value="Immunoglobulin FC, subunit C"/>
    <property type="match status" value="1"/>
</dbReference>
<dbReference type="Gene3D" id="3.30.70.3500">
    <property type="entry name" value="MukB, hinge domain"/>
    <property type="match status" value="1"/>
</dbReference>
<dbReference type="HAMAP" id="MF_01800">
    <property type="entry name" value="MukB"/>
    <property type="match status" value="1"/>
</dbReference>
<dbReference type="InterPro" id="IPR012090">
    <property type="entry name" value="MukB"/>
</dbReference>
<dbReference type="InterPro" id="IPR050308">
    <property type="entry name" value="MukB/SMC"/>
</dbReference>
<dbReference type="InterPro" id="IPR032520">
    <property type="entry name" value="MukB_hinge"/>
</dbReference>
<dbReference type="InterPro" id="IPR042501">
    <property type="entry name" value="MukB_hinge_sf"/>
</dbReference>
<dbReference type="InterPro" id="IPR007406">
    <property type="entry name" value="MukB_N_dom"/>
</dbReference>
<dbReference type="InterPro" id="IPR027417">
    <property type="entry name" value="P-loop_NTPase"/>
</dbReference>
<dbReference type="NCBIfam" id="NF003422">
    <property type="entry name" value="PRK04863.1"/>
    <property type="match status" value="1"/>
</dbReference>
<dbReference type="PANTHER" id="PTHR42963">
    <property type="entry name" value="CHROMOSOME PARTITION PROTEIN MUKB"/>
    <property type="match status" value="1"/>
</dbReference>
<dbReference type="PANTHER" id="PTHR42963:SF1">
    <property type="entry name" value="DUF4476 DOMAIN-CONTAINING PROTEIN"/>
    <property type="match status" value="1"/>
</dbReference>
<dbReference type="Pfam" id="PF04310">
    <property type="entry name" value="MukB"/>
    <property type="match status" value="1"/>
</dbReference>
<dbReference type="Pfam" id="PF16330">
    <property type="entry name" value="MukB_hinge"/>
    <property type="match status" value="1"/>
</dbReference>
<dbReference type="Pfam" id="PF13558">
    <property type="entry name" value="SbcC_Walker_B"/>
    <property type="match status" value="1"/>
</dbReference>
<dbReference type="PIRSF" id="PIRSF005246">
    <property type="entry name" value="MukB"/>
    <property type="match status" value="1"/>
</dbReference>
<dbReference type="SUPFAM" id="SSF52540">
    <property type="entry name" value="P-loop containing nucleoside triphosphate hydrolases"/>
    <property type="match status" value="2"/>
</dbReference>